<name>PUR9_BACC0</name>
<proteinExistence type="inferred from homology"/>
<sequence length="511" mass="55516">MKKRALVSVSDKTGVVEFVKGLLEQGIEVISTGGTKKLLEENGLQVIGISEVTGFPEIMDGRVKTLHPNIHGGLLAVRDNETHVAQMNELGMEPIDFVVVNLYPFKETIAKPDVTFADAIENIDIGGPTMIRSAAKNHKFVSVIVDPVDYDVVLAELKENGEVAEETKRKLAAKVFRHTAAYDALISNYLTEQMGEESPETLTVTFEKKQDLRYGENPHQKATFYKAPFAATSSVAYAEQLHGKELSYNNINDADAALSIVKEFTEPAVVAVKHMNPCGVGVGTDIHEAYTRAYEADPVSIFGGIIAANREIDKATAEKLHEIFLEIIIAPSFSKEALEVLQSKKNLRLLTVNIEKATSASKKLTSVQGGLLVQEEDTLSLDESTISIPTKREPSEQEWKDLKLAWKVVKHVKSNAIVLAKDDMTIGVGAGQMNRVGSAKIAITQAGEKAQGSALASDAFFPMPDTVEEAAKAGITAIIQPGGSIRDEDSIKVADTYGIAMVFTGVRHFKH</sequence>
<comment type="catalytic activity">
    <reaction evidence="1">
        <text>(6R)-10-formyltetrahydrofolate + 5-amino-1-(5-phospho-beta-D-ribosyl)imidazole-4-carboxamide = 5-formamido-1-(5-phospho-D-ribosyl)imidazole-4-carboxamide + (6S)-5,6,7,8-tetrahydrofolate</text>
        <dbReference type="Rhea" id="RHEA:22192"/>
        <dbReference type="ChEBI" id="CHEBI:57453"/>
        <dbReference type="ChEBI" id="CHEBI:58467"/>
        <dbReference type="ChEBI" id="CHEBI:58475"/>
        <dbReference type="ChEBI" id="CHEBI:195366"/>
        <dbReference type="EC" id="2.1.2.3"/>
    </reaction>
</comment>
<comment type="catalytic activity">
    <reaction evidence="1">
        <text>IMP + H2O = 5-formamido-1-(5-phospho-D-ribosyl)imidazole-4-carboxamide</text>
        <dbReference type="Rhea" id="RHEA:18445"/>
        <dbReference type="ChEBI" id="CHEBI:15377"/>
        <dbReference type="ChEBI" id="CHEBI:58053"/>
        <dbReference type="ChEBI" id="CHEBI:58467"/>
        <dbReference type="EC" id="3.5.4.10"/>
    </reaction>
</comment>
<comment type="pathway">
    <text evidence="1">Purine metabolism; IMP biosynthesis via de novo pathway; 5-formamido-1-(5-phospho-D-ribosyl)imidazole-4-carboxamide from 5-amino-1-(5-phospho-D-ribosyl)imidazole-4-carboxamide (10-formyl THF route): step 1/1.</text>
</comment>
<comment type="pathway">
    <text evidence="1">Purine metabolism; IMP biosynthesis via de novo pathway; IMP from 5-formamido-1-(5-phospho-D-ribosyl)imidazole-4-carboxamide: step 1/1.</text>
</comment>
<comment type="domain">
    <text evidence="1">The IMP cyclohydrolase activity resides in the N-terminal region.</text>
</comment>
<comment type="similarity">
    <text evidence="1">Belongs to the PurH family.</text>
</comment>
<accession>B7JM89</accession>
<protein>
    <recommendedName>
        <fullName evidence="1">Bifunctional purine biosynthesis protein PurH</fullName>
    </recommendedName>
    <domain>
        <recommendedName>
            <fullName evidence="1">Phosphoribosylaminoimidazolecarboxamide formyltransferase</fullName>
            <ecNumber evidence="1">2.1.2.3</ecNumber>
        </recommendedName>
        <alternativeName>
            <fullName evidence="1">AICAR transformylase</fullName>
        </alternativeName>
    </domain>
    <domain>
        <recommendedName>
            <fullName evidence="1">IMP cyclohydrolase</fullName>
            <ecNumber evidence="1">3.5.4.10</ecNumber>
        </recommendedName>
        <alternativeName>
            <fullName evidence="1">ATIC</fullName>
        </alternativeName>
        <alternativeName>
            <fullName evidence="1">IMP synthase</fullName>
        </alternativeName>
        <alternativeName>
            <fullName evidence="1">Inosinicase</fullName>
        </alternativeName>
    </domain>
</protein>
<dbReference type="EC" id="2.1.2.3" evidence="1"/>
<dbReference type="EC" id="3.5.4.10" evidence="1"/>
<dbReference type="EMBL" id="CP001283">
    <property type="protein sequence ID" value="ACK90240.1"/>
    <property type="molecule type" value="Genomic_DNA"/>
</dbReference>
<dbReference type="RefSeq" id="WP_000745427.1">
    <property type="nucleotide sequence ID" value="NC_011773.1"/>
</dbReference>
<dbReference type="SMR" id="B7JM89"/>
<dbReference type="GeneID" id="45020357"/>
<dbReference type="KEGG" id="bcu:BCAH820_0330"/>
<dbReference type="HOGENOM" id="CLU_016316_5_2_9"/>
<dbReference type="UniPathway" id="UPA00074">
    <property type="reaction ID" value="UER00133"/>
</dbReference>
<dbReference type="UniPathway" id="UPA00074">
    <property type="reaction ID" value="UER00135"/>
</dbReference>
<dbReference type="Proteomes" id="UP000001363">
    <property type="component" value="Chromosome"/>
</dbReference>
<dbReference type="GO" id="GO:0005829">
    <property type="term" value="C:cytosol"/>
    <property type="evidence" value="ECO:0007669"/>
    <property type="project" value="TreeGrafter"/>
</dbReference>
<dbReference type="GO" id="GO:0003937">
    <property type="term" value="F:IMP cyclohydrolase activity"/>
    <property type="evidence" value="ECO:0007669"/>
    <property type="project" value="UniProtKB-UniRule"/>
</dbReference>
<dbReference type="GO" id="GO:0004643">
    <property type="term" value="F:phosphoribosylaminoimidazolecarboxamide formyltransferase activity"/>
    <property type="evidence" value="ECO:0007669"/>
    <property type="project" value="UniProtKB-UniRule"/>
</dbReference>
<dbReference type="GO" id="GO:0006189">
    <property type="term" value="P:'de novo' IMP biosynthetic process"/>
    <property type="evidence" value="ECO:0007669"/>
    <property type="project" value="UniProtKB-UniRule"/>
</dbReference>
<dbReference type="CDD" id="cd01421">
    <property type="entry name" value="IMPCH"/>
    <property type="match status" value="1"/>
</dbReference>
<dbReference type="FunFam" id="3.40.140.20:FF:000001">
    <property type="entry name" value="Bifunctional purine biosynthesis protein PurH"/>
    <property type="match status" value="1"/>
</dbReference>
<dbReference type="FunFam" id="3.40.140.20:FF:000002">
    <property type="entry name" value="Bifunctional purine biosynthesis protein PurH"/>
    <property type="match status" value="1"/>
</dbReference>
<dbReference type="FunFam" id="3.40.50.1380:FF:000001">
    <property type="entry name" value="Bifunctional purine biosynthesis protein PurH"/>
    <property type="match status" value="1"/>
</dbReference>
<dbReference type="Gene3D" id="3.40.140.20">
    <property type="match status" value="2"/>
</dbReference>
<dbReference type="Gene3D" id="3.40.50.1380">
    <property type="entry name" value="Methylglyoxal synthase-like domain"/>
    <property type="match status" value="1"/>
</dbReference>
<dbReference type="HAMAP" id="MF_00139">
    <property type="entry name" value="PurH"/>
    <property type="match status" value="1"/>
</dbReference>
<dbReference type="InterPro" id="IPR024051">
    <property type="entry name" value="AICAR_Tfase_dup_dom_sf"/>
</dbReference>
<dbReference type="InterPro" id="IPR016193">
    <property type="entry name" value="Cytidine_deaminase-like"/>
</dbReference>
<dbReference type="InterPro" id="IPR011607">
    <property type="entry name" value="MGS-like_dom"/>
</dbReference>
<dbReference type="InterPro" id="IPR036914">
    <property type="entry name" value="MGS-like_dom_sf"/>
</dbReference>
<dbReference type="InterPro" id="IPR002695">
    <property type="entry name" value="PurH-like"/>
</dbReference>
<dbReference type="NCBIfam" id="NF002049">
    <property type="entry name" value="PRK00881.1"/>
    <property type="match status" value="1"/>
</dbReference>
<dbReference type="NCBIfam" id="TIGR00355">
    <property type="entry name" value="purH"/>
    <property type="match status" value="1"/>
</dbReference>
<dbReference type="PANTHER" id="PTHR11692:SF0">
    <property type="entry name" value="BIFUNCTIONAL PURINE BIOSYNTHESIS PROTEIN ATIC"/>
    <property type="match status" value="1"/>
</dbReference>
<dbReference type="PANTHER" id="PTHR11692">
    <property type="entry name" value="BIFUNCTIONAL PURINE BIOSYNTHESIS PROTEIN PURH"/>
    <property type="match status" value="1"/>
</dbReference>
<dbReference type="Pfam" id="PF01808">
    <property type="entry name" value="AICARFT_IMPCHas"/>
    <property type="match status" value="1"/>
</dbReference>
<dbReference type="Pfam" id="PF02142">
    <property type="entry name" value="MGS"/>
    <property type="match status" value="1"/>
</dbReference>
<dbReference type="PIRSF" id="PIRSF000414">
    <property type="entry name" value="AICARFT_IMPCHas"/>
    <property type="match status" value="1"/>
</dbReference>
<dbReference type="SMART" id="SM00798">
    <property type="entry name" value="AICARFT_IMPCHas"/>
    <property type="match status" value="1"/>
</dbReference>
<dbReference type="SMART" id="SM00851">
    <property type="entry name" value="MGS"/>
    <property type="match status" value="1"/>
</dbReference>
<dbReference type="SUPFAM" id="SSF53927">
    <property type="entry name" value="Cytidine deaminase-like"/>
    <property type="match status" value="1"/>
</dbReference>
<dbReference type="SUPFAM" id="SSF52335">
    <property type="entry name" value="Methylglyoxal synthase-like"/>
    <property type="match status" value="1"/>
</dbReference>
<dbReference type="PROSITE" id="PS51855">
    <property type="entry name" value="MGS"/>
    <property type="match status" value="1"/>
</dbReference>
<organism>
    <name type="scientific">Bacillus cereus (strain AH820)</name>
    <dbReference type="NCBI Taxonomy" id="405535"/>
    <lineage>
        <taxon>Bacteria</taxon>
        <taxon>Bacillati</taxon>
        <taxon>Bacillota</taxon>
        <taxon>Bacilli</taxon>
        <taxon>Bacillales</taxon>
        <taxon>Bacillaceae</taxon>
        <taxon>Bacillus</taxon>
        <taxon>Bacillus cereus group</taxon>
    </lineage>
</organism>
<gene>
    <name evidence="1" type="primary">purH</name>
    <name type="ordered locus">BCAH820_0330</name>
</gene>
<feature type="chain" id="PRO_1000117864" description="Bifunctional purine biosynthesis protein PurH">
    <location>
        <begin position="1"/>
        <end position="511"/>
    </location>
</feature>
<feature type="domain" description="MGS-like" evidence="2">
    <location>
        <begin position="1"/>
        <end position="145"/>
    </location>
</feature>
<keyword id="KW-0378">Hydrolase</keyword>
<keyword id="KW-0511">Multifunctional enzyme</keyword>
<keyword id="KW-0658">Purine biosynthesis</keyword>
<keyword id="KW-0808">Transferase</keyword>
<reference key="1">
    <citation type="submission" date="2008-10" db="EMBL/GenBank/DDBJ databases">
        <title>Genome sequence of Bacillus cereus AH820.</title>
        <authorList>
            <person name="Dodson R.J."/>
            <person name="Durkin A.S."/>
            <person name="Rosovitz M.J."/>
            <person name="Rasko D.A."/>
            <person name="Hoffmaster A."/>
            <person name="Ravel J."/>
            <person name="Sutton G."/>
        </authorList>
    </citation>
    <scope>NUCLEOTIDE SEQUENCE [LARGE SCALE GENOMIC DNA]</scope>
    <source>
        <strain>AH820</strain>
    </source>
</reference>
<evidence type="ECO:0000255" key="1">
    <source>
        <dbReference type="HAMAP-Rule" id="MF_00139"/>
    </source>
</evidence>
<evidence type="ECO:0000255" key="2">
    <source>
        <dbReference type="PROSITE-ProRule" id="PRU01202"/>
    </source>
</evidence>